<proteinExistence type="inferred from homology"/>
<dbReference type="EMBL" id="CH445326">
    <property type="protein sequence ID" value="EAT91123.2"/>
    <property type="status" value="ALT_INIT"/>
    <property type="molecule type" value="Genomic_DNA"/>
</dbReference>
<dbReference type="RefSeq" id="XP_001792112.1">
    <property type="nucleotide sequence ID" value="XM_001792060.1"/>
</dbReference>
<dbReference type="SMR" id="Q0V3E0"/>
<dbReference type="FunCoup" id="Q0V3E0">
    <property type="interactions" value="26"/>
</dbReference>
<dbReference type="STRING" id="321614.Q0V3E0"/>
<dbReference type="GeneID" id="5968957"/>
<dbReference type="KEGG" id="pno:SNOG_01474"/>
<dbReference type="VEuPathDB" id="FungiDB:JI435_014740"/>
<dbReference type="eggNOG" id="ENOG502SCUM">
    <property type="taxonomic scope" value="Eukaryota"/>
</dbReference>
<dbReference type="InParanoid" id="Q0V3E0"/>
<dbReference type="Proteomes" id="UP000001055">
    <property type="component" value="Unassembled WGS sequence"/>
</dbReference>
<dbReference type="GO" id="GO:0005634">
    <property type="term" value="C:nucleus"/>
    <property type="evidence" value="ECO:0007669"/>
    <property type="project" value="UniProtKB-SubCell"/>
</dbReference>
<dbReference type="InterPro" id="IPR019098">
    <property type="entry name" value="Histone_chaperone_domain_CHZ"/>
</dbReference>
<dbReference type="Pfam" id="PF09649">
    <property type="entry name" value="CHZ"/>
    <property type="match status" value="1"/>
</dbReference>
<dbReference type="SMART" id="SM01082">
    <property type="entry name" value="CHZ"/>
    <property type="match status" value="1"/>
</dbReference>
<keyword id="KW-0143">Chaperone</keyword>
<keyword id="KW-0539">Nucleus</keyword>
<name>CHZ1_PHANO</name>
<comment type="function">
    <text evidence="1">Forms a chaperone-bound H2A.Z-H2B complex that acts as a source for SWR1 complex-dependent H2A to H2A.Z histone replacement in chromatin.</text>
</comment>
<comment type="subunit">
    <text evidence="1">Forms a heterotrimer with H2A.Z-H2B, stabilizing the association of the histone dimer. Also, with a lower affinity, forms a heterotrimer with H2A-H2B (By similarity).</text>
</comment>
<comment type="subcellular location">
    <subcellularLocation>
        <location evidence="1">Nucleus</location>
    </subcellularLocation>
</comment>
<comment type="similarity">
    <text evidence="3">Belongs to the CHZ1 family.</text>
</comment>
<comment type="sequence caution" evidence="3">
    <conflict type="erroneous initiation">
        <sequence resource="EMBL-CDS" id="EAT91123"/>
    </conflict>
</comment>
<protein>
    <recommendedName>
        <fullName>Histone H2A.Z-specific chaperone CHZ1</fullName>
    </recommendedName>
</protein>
<evidence type="ECO:0000250" key="1"/>
<evidence type="ECO:0000256" key="2">
    <source>
        <dbReference type="SAM" id="MobiDB-lite"/>
    </source>
</evidence>
<evidence type="ECO:0000305" key="3"/>
<organism>
    <name type="scientific">Phaeosphaeria nodorum (strain SN15 / ATCC MYA-4574 / FGSC 10173)</name>
    <name type="common">Glume blotch fungus</name>
    <name type="synonym">Parastagonospora nodorum</name>
    <dbReference type="NCBI Taxonomy" id="321614"/>
    <lineage>
        <taxon>Eukaryota</taxon>
        <taxon>Fungi</taxon>
        <taxon>Dikarya</taxon>
        <taxon>Ascomycota</taxon>
        <taxon>Pezizomycotina</taxon>
        <taxon>Dothideomycetes</taxon>
        <taxon>Pleosporomycetidae</taxon>
        <taxon>Pleosporales</taxon>
        <taxon>Pleosporineae</taxon>
        <taxon>Phaeosphaeriaceae</taxon>
        <taxon>Parastagonospora</taxon>
    </lineage>
</organism>
<feature type="chain" id="PRO_0000330217" description="Histone H2A.Z-specific chaperone CHZ1">
    <location>
        <begin position="1"/>
        <end position="106"/>
    </location>
</feature>
<feature type="region of interest" description="Disordered" evidence="2">
    <location>
        <begin position="1"/>
        <end position="106"/>
    </location>
</feature>
<feature type="compositionally biased region" description="Polar residues" evidence="2">
    <location>
        <begin position="1"/>
        <end position="11"/>
    </location>
</feature>
<feature type="compositionally biased region" description="Basic and acidic residues" evidence="2">
    <location>
        <begin position="17"/>
        <end position="27"/>
    </location>
</feature>
<feature type="compositionally biased region" description="Acidic residues" evidence="2">
    <location>
        <begin position="29"/>
        <end position="62"/>
    </location>
</feature>
<feature type="compositionally biased region" description="Acidic residues" evidence="2">
    <location>
        <begin position="85"/>
        <end position="106"/>
    </location>
</feature>
<sequence length="106" mass="11659">MSAQQDNQMQGVQDPAAEGKGKGKAPEDNTVEESMDDDSSDESGAEEQVLEEPDEDNMEEIDTANVIGSRTRGKNIDFAKANQELGDDDEEDDDEDFVDPDDEMKD</sequence>
<gene>
    <name type="primary">CHZ1</name>
    <name type="ORF">SNOG_01474</name>
</gene>
<accession>Q0V3E0</accession>
<reference key="1">
    <citation type="journal article" date="2007" name="Plant Cell">
        <title>Dothideomycete-plant interactions illuminated by genome sequencing and EST analysis of the wheat pathogen Stagonospora nodorum.</title>
        <authorList>
            <person name="Hane J.K."/>
            <person name="Lowe R.G.T."/>
            <person name="Solomon P.S."/>
            <person name="Tan K.-C."/>
            <person name="Schoch C.L."/>
            <person name="Spatafora J.W."/>
            <person name="Crous P.W."/>
            <person name="Kodira C.D."/>
            <person name="Birren B.W."/>
            <person name="Galagan J.E."/>
            <person name="Torriani S.F.F."/>
            <person name="McDonald B.A."/>
            <person name="Oliver R.P."/>
        </authorList>
    </citation>
    <scope>NUCLEOTIDE SEQUENCE [LARGE SCALE GENOMIC DNA]</scope>
    <source>
        <strain>SN15 / ATCC MYA-4574 / FGSC 10173</strain>
    </source>
</reference>